<accession>Q6A9H7</accession>
<organism>
    <name type="scientific">Cutibacterium acnes (strain DSM 16379 / KPA171202)</name>
    <name type="common">Propionibacterium acnes</name>
    <dbReference type="NCBI Taxonomy" id="267747"/>
    <lineage>
        <taxon>Bacteria</taxon>
        <taxon>Bacillati</taxon>
        <taxon>Actinomycetota</taxon>
        <taxon>Actinomycetes</taxon>
        <taxon>Propionibacteriales</taxon>
        <taxon>Propionibacteriaceae</taxon>
        <taxon>Cutibacterium</taxon>
    </lineage>
</organism>
<comment type="function">
    <text evidence="1">Catalyzes the transfer of a phosphate group to glutamate to form L-glutamate 5-phosphate.</text>
</comment>
<comment type="catalytic activity">
    <reaction evidence="1">
        <text>L-glutamate + ATP = L-glutamyl 5-phosphate + ADP</text>
        <dbReference type="Rhea" id="RHEA:14877"/>
        <dbReference type="ChEBI" id="CHEBI:29985"/>
        <dbReference type="ChEBI" id="CHEBI:30616"/>
        <dbReference type="ChEBI" id="CHEBI:58274"/>
        <dbReference type="ChEBI" id="CHEBI:456216"/>
        <dbReference type="EC" id="2.7.2.11"/>
    </reaction>
</comment>
<comment type="pathway">
    <text evidence="1">Amino-acid biosynthesis; L-proline biosynthesis; L-glutamate 5-semialdehyde from L-glutamate: step 1/2.</text>
</comment>
<comment type="subcellular location">
    <subcellularLocation>
        <location evidence="1">Cytoplasm</location>
    </subcellularLocation>
</comment>
<comment type="similarity">
    <text evidence="1">Belongs to the glutamate 5-kinase family.</text>
</comment>
<comment type="sequence caution" evidence="3">
    <conflict type="erroneous initiation">
        <sequence resource="EMBL-CDS" id="AAT82589"/>
    </conflict>
</comment>
<feature type="chain" id="PRO_0000109705" description="Glutamate 5-kinase">
    <location>
        <begin position="1"/>
        <end position="391"/>
    </location>
</feature>
<feature type="domain" description="PUA" evidence="1">
    <location>
        <begin position="278"/>
        <end position="356"/>
    </location>
</feature>
<feature type="region of interest" description="Disordered" evidence="2">
    <location>
        <begin position="370"/>
        <end position="391"/>
    </location>
</feature>
<feature type="compositionally biased region" description="Polar residues" evidence="2">
    <location>
        <begin position="378"/>
        <end position="391"/>
    </location>
</feature>
<feature type="binding site" evidence="1">
    <location>
        <position position="17"/>
    </location>
    <ligand>
        <name>ATP</name>
        <dbReference type="ChEBI" id="CHEBI:30616"/>
    </ligand>
</feature>
<feature type="binding site" evidence="1">
    <location>
        <position position="57"/>
    </location>
    <ligand>
        <name>substrate</name>
    </ligand>
</feature>
<feature type="binding site" evidence="1">
    <location>
        <position position="144"/>
    </location>
    <ligand>
        <name>substrate</name>
    </ligand>
</feature>
<feature type="binding site" evidence="1">
    <location>
        <position position="156"/>
    </location>
    <ligand>
        <name>substrate</name>
    </ligand>
</feature>
<feature type="binding site" evidence="1">
    <location>
        <begin position="176"/>
        <end position="177"/>
    </location>
    <ligand>
        <name>ATP</name>
        <dbReference type="ChEBI" id="CHEBI:30616"/>
    </ligand>
</feature>
<feature type="binding site" evidence="1">
    <location>
        <begin position="216"/>
        <end position="222"/>
    </location>
    <ligand>
        <name>ATP</name>
        <dbReference type="ChEBI" id="CHEBI:30616"/>
    </ligand>
</feature>
<gene>
    <name evidence="1" type="primary">proB</name>
    <name type="ordered locus">PPA0834</name>
</gene>
<protein>
    <recommendedName>
        <fullName evidence="1">Glutamate 5-kinase</fullName>
        <ecNumber evidence="1">2.7.2.11</ecNumber>
    </recommendedName>
    <alternativeName>
        <fullName evidence="1">Gamma-glutamyl kinase</fullName>
        <shortName evidence="1">GK</shortName>
    </alternativeName>
</protein>
<reference key="1">
    <citation type="journal article" date="2004" name="Science">
        <title>The complete genome sequence of Propionibacterium acnes, a commensal of human skin.</title>
        <authorList>
            <person name="Brueggemann H."/>
            <person name="Henne A."/>
            <person name="Hoster F."/>
            <person name="Liesegang H."/>
            <person name="Wiezer A."/>
            <person name="Strittmatter A."/>
            <person name="Hujer S."/>
            <person name="Duerre P."/>
            <person name="Gottschalk G."/>
        </authorList>
    </citation>
    <scope>NUCLEOTIDE SEQUENCE [LARGE SCALE GENOMIC DNA]</scope>
    <source>
        <strain>DSM 16379 / KPA171202</strain>
    </source>
</reference>
<proteinExistence type="inferred from homology"/>
<keyword id="KW-0028">Amino-acid biosynthesis</keyword>
<keyword id="KW-0067">ATP-binding</keyword>
<keyword id="KW-0963">Cytoplasm</keyword>
<keyword id="KW-0418">Kinase</keyword>
<keyword id="KW-0547">Nucleotide-binding</keyword>
<keyword id="KW-0641">Proline biosynthesis</keyword>
<keyword id="KW-0808">Transferase</keyword>
<dbReference type="EC" id="2.7.2.11" evidence="1"/>
<dbReference type="EMBL" id="AE017283">
    <property type="protein sequence ID" value="AAT82589.1"/>
    <property type="status" value="ALT_INIT"/>
    <property type="molecule type" value="Genomic_DNA"/>
</dbReference>
<dbReference type="RefSeq" id="WP_002518286.1">
    <property type="nucleotide sequence ID" value="NZ_CP025935.1"/>
</dbReference>
<dbReference type="SMR" id="Q6A9H7"/>
<dbReference type="EnsemblBacteria" id="AAT82589">
    <property type="protein sequence ID" value="AAT82589"/>
    <property type="gene ID" value="PPA0834"/>
</dbReference>
<dbReference type="KEGG" id="pac:PPA0834"/>
<dbReference type="PATRIC" id="fig|267747.3.peg.869"/>
<dbReference type="eggNOG" id="COG0263">
    <property type="taxonomic scope" value="Bacteria"/>
</dbReference>
<dbReference type="HOGENOM" id="CLU_025400_2_0_11"/>
<dbReference type="UniPathway" id="UPA00098">
    <property type="reaction ID" value="UER00359"/>
</dbReference>
<dbReference type="Proteomes" id="UP000000603">
    <property type="component" value="Chromosome"/>
</dbReference>
<dbReference type="GO" id="GO:0005829">
    <property type="term" value="C:cytosol"/>
    <property type="evidence" value="ECO:0007669"/>
    <property type="project" value="TreeGrafter"/>
</dbReference>
<dbReference type="GO" id="GO:0005524">
    <property type="term" value="F:ATP binding"/>
    <property type="evidence" value="ECO:0007669"/>
    <property type="project" value="UniProtKB-KW"/>
</dbReference>
<dbReference type="GO" id="GO:0004349">
    <property type="term" value="F:glutamate 5-kinase activity"/>
    <property type="evidence" value="ECO:0007669"/>
    <property type="project" value="UniProtKB-UniRule"/>
</dbReference>
<dbReference type="GO" id="GO:0003723">
    <property type="term" value="F:RNA binding"/>
    <property type="evidence" value="ECO:0007669"/>
    <property type="project" value="InterPro"/>
</dbReference>
<dbReference type="GO" id="GO:0055129">
    <property type="term" value="P:L-proline biosynthetic process"/>
    <property type="evidence" value="ECO:0007669"/>
    <property type="project" value="UniProtKB-UniRule"/>
</dbReference>
<dbReference type="CDD" id="cd04242">
    <property type="entry name" value="AAK_G5K_ProB"/>
    <property type="match status" value="1"/>
</dbReference>
<dbReference type="CDD" id="cd21157">
    <property type="entry name" value="PUA_G5K"/>
    <property type="match status" value="1"/>
</dbReference>
<dbReference type="FunFam" id="3.40.1160.10:FF:000018">
    <property type="entry name" value="Glutamate 5-kinase"/>
    <property type="match status" value="1"/>
</dbReference>
<dbReference type="Gene3D" id="3.40.1160.10">
    <property type="entry name" value="Acetylglutamate kinase-like"/>
    <property type="match status" value="1"/>
</dbReference>
<dbReference type="Gene3D" id="2.30.130.10">
    <property type="entry name" value="PUA domain"/>
    <property type="match status" value="1"/>
</dbReference>
<dbReference type="HAMAP" id="MF_00456">
    <property type="entry name" value="ProB"/>
    <property type="match status" value="1"/>
</dbReference>
<dbReference type="InterPro" id="IPR036393">
    <property type="entry name" value="AceGlu_kinase-like_sf"/>
</dbReference>
<dbReference type="InterPro" id="IPR001048">
    <property type="entry name" value="Asp/Glu/Uridylate_kinase"/>
</dbReference>
<dbReference type="InterPro" id="IPR041739">
    <property type="entry name" value="G5K_ProB"/>
</dbReference>
<dbReference type="InterPro" id="IPR001057">
    <property type="entry name" value="Glu/AcGlu_kinase"/>
</dbReference>
<dbReference type="InterPro" id="IPR011529">
    <property type="entry name" value="Glu_5kinase"/>
</dbReference>
<dbReference type="InterPro" id="IPR005715">
    <property type="entry name" value="Glu_5kinase/COase_Synthase"/>
</dbReference>
<dbReference type="InterPro" id="IPR019797">
    <property type="entry name" value="Glutamate_5-kinase_CS"/>
</dbReference>
<dbReference type="InterPro" id="IPR002478">
    <property type="entry name" value="PUA"/>
</dbReference>
<dbReference type="InterPro" id="IPR015947">
    <property type="entry name" value="PUA-like_sf"/>
</dbReference>
<dbReference type="InterPro" id="IPR036974">
    <property type="entry name" value="PUA_sf"/>
</dbReference>
<dbReference type="NCBIfam" id="TIGR01027">
    <property type="entry name" value="proB"/>
    <property type="match status" value="1"/>
</dbReference>
<dbReference type="PANTHER" id="PTHR43654">
    <property type="entry name" value="GLUTAMATE 5-KINASE"/>
    <property type="match status" value="1"/>
</dbReference>
<dbReference type="PANTHER" id="PTHR43654:SF1">
    <property type="entry name" value="ISOPENTENYL PHOSPHATE KINASE"/>
    <property type="match status" value="1"/>
</dbReference>
<dbReference type="Pfam" id="PF00696">
    <property type="entry name" value="AA_kinase"/>
    <property type="match status" value="1"/>
</dbReference>
<dbReference type="Pfam" id="PF01472">
    <property type="entry name" value="PUA"/>
    <property type="match status" value="1"/>
</dbReference>
<dbReference type="PIRSF" id="PIRSF000729">
    <property type="entry name" value="GK"/>
    <property type="match status" value="1"/>
</dbReference>
<dbReference type="PRINTS" id="PR00474">
    <property type="entry name" value="GLU5KINASE"/>
</dbReference>
<dbReference type="SMART" id="SM00359">
    <property type="entry name" value="PUA"/>
    <property type="match status" value="1"/>
</dbReference>
<dbReference type="SUPFAM" id="SSF53633">
    <property type="entry name" value="Carbamate kinase-like"/>
    <property type="match status" value="1"/>
</dbReference>
<dbReference type="SUPFAM" id="SSF88697">
    <property type="entry name" value="PUA domain-like"/>
    <property type="match status" value="1"/>
</dbReference>
<dbReference type="PROSITE" id="PS00902">
    <property type="entry name" value="GLUTAMATE_5_KINASE"/>
    <property type="match status" value="1"/>
</dbReference>
<dbReference type="PROSITE" id="PS50890">
    <property type="entry name" value="PUA"/>
    <property type="match status" value="1"/>
</dbReference>
<sequence>MTDQRGAICGAATLVVKVGSSSLTLPGGGIDVRRVDDLVDALSEVIAVGRRVVLVSSGAIATGFPAMGITHRPRTLAGKQAAASVGQGILLAHYASRFASHGLRVGQVLLTVNDLVRPTSYRNAWSTLDTLLGLGVVPIVNENDTVATGEIRFGDNDRLAALVAELVRAQALILLSDVDALYTAHPDSPDARRVEVVEDIDTLDVDTHKAGSGVGTGGMTTKLEAARMATCAGVPVVLAAAVDAPDVLAGVPVGTYFRPLATRRPRRLLWLADAATPQGQIVIDDGAVEALTQRHSSLLAVGVTRVHGDFQAGDPVTILASDGRVVGRGIAQFSHDEVRVMRGRSSAWLAAEMGPAASREIIHRDAMVLSRRRKAEPSSRNQKSSGSRVTS</sequence>
<name>PROB_CUTAK</name>
<evidence type="ECO:0000255" key="1">
    <source>
        <dbReference type="HAMAP-Rule" id="MF_00456"/>
    </source>
</evidence>
<evidence type="ECO:0000256" key="2">
    <source>
        <dbReference type="SAM" id="MobiDB-lite"/>
    </source>
</evidence>
<evidence type="ECO:0000305" key="3"/>